<sequence>MRNQSSLSDRLTVEVDCSSLGSNECPSMTSSFSPLESPTPTPTSIYSQGSLESPGWHGAGSLPNNTYERTPGSASMRSAFRLAGMASTESLGLPYGSMEGQERMPMPDFLSGYDENIEQLWMPSEAPKSYDHVAQGLAYHQGMHQYPTMARNTNNNYRHQAAAYLPESTTNPCLSRSIFHQPERVPSSMSSSMSMNNMLPWMNLGDSIAPQTIAPSQVGPVTPPPSYTDFPTSLSAFKQHSPTTPIRSCSLGTGSGADTPLSRLSGGPCEYMDDFQPSPVYRDGFQRPHRVASRKMLRRQTSKQNLMLENLPQVIKQVQFKCKEPGCNGRFKRQEHLKRHMKSHSKEKPHVCWVPGCHRAFSRSDNLNAHYTKTHSKRGGRNRYVATLDENSPDYDPEFRGQLTPDGRPIYGSKLDDPIPGAGDMSLDGWDE</sequence>
<accession>P10069</accession>
<accession>C8VUE5</accession>
<accession>Q5BEQ7</accession>
<organism>
    <name type="scientific">Emericella nidulans (strain FGSC A4 / ATCC 38163 / CBS 112.46 / NRRL 194 / M139)</name>
    <name type="common">Aspergillus nidulans</name>
    <dbReference type="NCBI Taxonomy" id="227321"/>
    <lineage>
        <taxon>Eukaryota</taxon>
        <taxon>Fungi</taxon>
        <taxon>Dikarya</taxon>
        <taxon>Ascomycota</taxon>
        <taxon>Pezizomycotina</taxon>
        <taxon>Eurotiomycetes</taxon>
        <taxon>Eurotiomycetidae</taxon>
        <taxon>Eurotiales</taxon>
        <taxon>Aspergillaceae</taxon>
        <taxon>Aspergillus</taxon>
        <taxon>Aspergillus subgen. Nidulantes</taxon>
    </lineage>
</organism>
<gene>
    <name evidence="16" type="primary">brlA</name>
    <name type="ORF">AN0973</name>
</gene>
<protein>
    <recommendedName>
        <fullName evidence="18">C2H2 type master regulator of conidiophore development brlA</fullName>
    </recommendedName>
    <alternativeName>
        <fullName evidence="17">Bristle A protein</fullName>
    </alternativeName>
</protein>
<reference key="1">
    <citation type="journal article" date="1988" name="Cell">
        <title>brlA is necessary and sufficient to direct conidiophore development in Aspergillus nidulans.</title>
        <authorList>
            <person name="Adams T.H."/>
            <person name="Boylan M.T."/>
            <person name="Timberlake W.E."/>
        </authorList>
    </citation>
    <scope>NUCLEOTIDE SEQUENCE [GENOMIC DNA]</scope>
    <scope>FUNCTION</scope>
    <source>
        <strain>FGSC A4 / ATCC 38163 / CBS 112.46 / NRRL 194 / M139</strain>
    </source>
</reference>
<reference key="2">
    <citation type="journal article" date="1997" name="Fungal Genet. Biol.">
        <title>Multicellular ascomycetous fungal genomes contain more than 8000 genes.</title>
        <authorList>
            <person name="Kupfer D.M."/>
            <person name="Reece C.A."/>
            <person name="Clifton S.W."/>
            <person name="Roe B.A."/>
            <person name="Prade R.A."/>
        </authorList>
    </citation>
    <scope>NUCLEOTIDE SEQUENCE [GENOMIC DNA]</scope>
</reference>
<reference key="3">
    <citation type="journal article" date="2005" name="Nature">
        <title>Sequencing of Aspergillus nidulans and comparative analysis with A. fumigatus and A. oryzae.</title>
        <authorList>
            <person name="Galagan J.E."/>
            <person name="Calvo S.E."/>
            <person name="Cuomo C."/>
            <person name="Ma L.-J."/>
            <person name="Wortman J.R."/>
            <person name="Batzoglou S."/>
            <person name="Lee S.-I."/>
            <person name="Bastuerkmen M."/>
            <person name="Spevak C.C."/>
            <person name="Clutterbuck J."/>
            <person name="Kapitonov V."/>
            <person name="Jurka J."/>
            <person name="Scazzocchio C."/>
            <person name="Farman M.L."/>
            <person name="Butler J."/>
            <person name="Purcell S."/>
            <person name="Harris S."/>
            <person name="Braus G.H."/>
            <person name="Draht O."/>
            <person name="Busch S."/>
            <person name="D'Enfert C."/>
            <person name="Bouchier C."/>
            <person name="Goldman G.H."/>
            <person name="Bell-Pedersen D."/>
            <person name="Griffiths-Jones S."/>
            <person name="Doonan J.H."/>
            <person name="Yu J."/>
            <person name="Vienken K."/>
            <person name="Pain A."/>
            <person name="Freitag M."/>
            <person name="Selker E.U."/>
            <person name="Archer D.B."/>
            <person name="Penalva M.A."/>
            <person name="Oakley B.R."/>
            <person name="Momany M."/>
            <person name="Tanaka T."/>
            <person name="Kumagai T."/>
            <person name="Asai K."/>
            <person name="Machida M."/>
            <person name="Nierman W.C."/>
            <person name="Denning D.W."/>
            <person name="Caddick M.X."/>
            <person name="Hynes M."/>
            <person name="Paoletti M."/>
            <person name="Fischer R."/>
            <person name="Miller B.L."/>
            <person name="Dyer P.S."/>
            <person name="Sachs M.S."/>
            <person name="Osmani S.A."/>
            <person name="Birren B.W."/>
        </authorList>
    </citation>
    <scope>NUCLEOTIDE SEQUENCE [LARGE SCALE GENOMIC DNA]</scope>
    <source>
        <strain>FGSC A4 / ATCC 38163 / CBS 112.46 / NRRL 194 / M139</strain>
    </source>
</reference>
<reference key="4">
    <citation type="journal article" date="2009" name="Fungal Genet. Biol.">
        <title>The 2008 update of the Aspergillus nidulans genome annotation: a community effort.</title>
        <authorList>
            <person name="Wortman J.R."/>
            <person name="Gilsenan J.M."/>
            <person name="Joardar V."/>
            <person name="Deegan J."/>
            <person name="Clutterbuck J."/>
            <person name="Andersen M.R."/>
            <person name="Archer D."/>
            <person name="Bencina M."/>
            <person name="Braus G."/>
            <person name="Coutinho P."/>
            <person name="von Dohren H."/>
            <person name="Doonan J."/>
            <person name="Driessen A.J."/>
            <person name="Durek P."/>
            <person name="Espeso E."/>
            <person name="Fekete E."/>
            <person name="Flipphi M."/>
            <person name="Estrada C.G."/>
            <person name="Geysens S."/>
            <person name="Goldman G."/>
            <person name="de Groot P.W."/>
            <person name="Hansen K."/>
            <person name="Harris S.D."/>
            <person name="Heinekamp T."/>
            <person name="Helmstaedt K."/>
            <person name="Henrissat B."/>
            <person name="Hofmann G."/>
            <person name="Homan T."/>
            <person name="Horio T."/>
            <person name="Horiuchi H."/>
            <person name="James S."/>
            <person name="Jones M."/>
            <person name="Karaffa L."/>
            <person name="Karanyi Z."/>
            <person name="Kato M."/>
            <person name="Keller N."/>
            <person name="Kelly D.E."/>
            <person name="Kiel J.A."/>
            <person name="Kim J.M."/>
            <person name="van der Klei I.J."/>
            <person name="Klis F.M."/>
            <person name="Kovalchuk A."/>
            <person name="Krasevec N."/>
            <person name="Kubicek C.P."/>
            <person name="Liu B."/>
            <person name="Maccabe A."/>
            <person name="Meyer V."/>
            <person name="Mirabito P."/>
            <person name="Miskei M."/>
            <person name="Mos M."/>
            <person name="Mullins J."/>
            <person name="Nelson D.R."/>
            <person name="Nielsen J."/>
            <person name="Oakley B.R."/>
            <person name="Osmani S.A."/>
            <person name="Pakula T."/>
            <person name="Paszewski A."/>
            <person name="Paulsen I."/>
            <person name="Pilsyk S."/>
            <person name="Pocsi I."/>
            <person name="Punt P.J."/>
            <person name="Ram A.F."/>
            <person name="Ren Q."/>
            <person name="Robellet X."/>
            <person name="Robson G."/>
            <person name="Seiboth B."/>
            <person name="van Solingen P."/>
            <person name="Specht T."/>
            <person name="Sun J."/>
            <person name="Taheri-Talesh N."/>
            <person name="Takeshita N."/>
            <person name="Ussery D."/>
            <person name="vanKuyk P.A."/>
            <person name="Visser H."/>
            <person name="van de Vondervoort P.J."/>
            <person name="de Vries R.P."/>
            <person name="Walton J."/>
            <person name="Xiang X."/>
            <person name="Xiong Y."/>
            <person name="Zeng A.P."/>
            <person name="Brandt B.W."/>
            <person name="Cornell M.J."/>
            <person name="van den Hondel C.A."/>
            <person name="Visser J."/>
            <person name="Oliver S.G."/>
            <person name="Turner G."/>
        </authorList>
    </citation>
    <scope>GENOME REANNOTATION</scope>
    <source>
        <strain>FGSC A4 / ATCC 38163 / CBS 112.46 / NRRL 194 / M139</strain>
    </source>
</reference>
<reference key="5">
    <citation type="journal article" date="1993" name="EMBO J.">
        <title>The Aspergillus nidulans brlA regulatory locus consists of overlapping transcription units that are individually required for conidiophore development.</title>
        <authorList>
            <person name="Prade R.A."/>
            <person name="Timberlake W.E."/>
        </authorList>
    </citation>
    <scope>NUCLEOTIDE SEQUENCE [GENOMIC DNA] OF 1-37</scope>
    <scope>FUNCTION</scope>
    <source>
        <strain>FGSC A4 / ATCC 38163 / CBS 112.46 / NRRL 194 / M139</strain>
    </source>
</reference>
<reference key="6">
    <citation type="journal article" date="1969" name="Genetics">
        <title>A mutational analysis of conidial development in Aspergillus nidulans.</title>
        <authorList>
            <person name="Clutterbuck A.J."/>
        </authorList>
    </citation>
    <scope>FUNCTION</scope>
</reference>
<reference key="7">
    <citation type="journal article" date="1987" name="Mol. Cell. Biol.">
        <title>Isolation and physical characterization of three essential conidiation genes from Aspergillus nidulans.</title>
        <authorList>
            <person name="Boylan M.T."/>
            <person name="Mirabito P.M."/>
            <person name="Willett C.E."/>
            <person name="Zimmerman C.R."/>
            <person name="Timberlake W.E."/>
        </authorList>
    </citation>
    <scope>FUNCTION</scope>
    <scope>DISRUPTION PHENOTYPE</scope>
    <scope>INDUCTION</scope>
</reference>
<reference key="8">
    <citation type="journal article" date="1989" name="Cell">
        <title>Interactions of three sequentially expressed genes control temporal and spatial specificity in Aspergillus development.</title>
        <authorList>
            <person name="Mirabito P.M."/>
            <person name="Adams T.H."/>
            <person name="Timberlake W.E."/>
        </authorList>
    </citation>
    <scope>FUNCTION</scope>
    <scope>INDUCTION</scope>
</reference>
<reference key="9">
    <citation type="journal article" date="1990" name="Mol. Cell. Biol.">
        <title>brlA requires both zinc fingers to induce development.</title>
        <authorList>
            <person name="Adams T.H."/>
            <person name="Deising H."/>
            <person name="Timberlake W.E."/>
        </authorList>
    </citation>
    <scope>FUNCTION</scope>
    <scope>MUTAGENESIS OF CYS-327 AND CYS-357</scope>
    <scope>DOMAIN</scope>
</reference>
<reference key="10">
    <citation type="journal article" date="1990" name="Proc. Natl. Acad. Sci. U.S.A.">
        <title>Developmental repression of growth and gene expression in Aspergillus.</title>
        <authorList>
            <person name="Adams T.H."/>
            <person name="Timberlake W.E."/>
        </authorList>
    </citation>
    <scope>FUNCTION</scope>
</reference>
<reference key="11">
    <citation type="journal article" date="1991" name="Gene">
        <title>Isolation and developmentally regulated expression of an Aspergillus nidulans phenol oxidase-encoding gene, ivoB.</title>
        <authorList>
            <person name="Birse C.E."/>
            <person name="Clutterbuck A.J."/>
        </authorList>
    </citation>
    <scope>FUNCTION</scope>
</reference>
<reference key="12">
    <citation type="journal article" date="1991" name="Genes Dev.">
        <title>Rodletless, a new Aspergillus developmental mutant induced by directed gene inactivation.</title>
        <authorList>
            <person name="Stringer M.A."/>
            <person name="Dean R.A."/>
            <person name="Sewall T.C."/>
            <person name="Timberlake W.E."/>
        </authorList>
    </citation>
    <scope>FUNCTION</scope>
</reference>
<reference key="13">
    <citation type="journal article" date="1992" name="Mol. Cell. Biol.">
        <title>Isolation of a gene required for programmed initiation of development by Aspergillus nidulans.</title>
        <authorList>
            <person name="Adams T.H."/>
            <person name="Hide W.A."/>
            <person name="Yager L.N."/>
            <person name="Lee B.N."/>
        </authorList>
    </citation>
    <scope>INDUCTION</scope>
</reference>
<reference key="14">
    <citation type="journal article" date="1993" name="Genetics">
        <title>Identification of Aspergillus brlA response elements (BREs) by genetic selection in yeast.</title>
        <authorList>
            <person name="Chang Y.C."/>
            <person name="Timberlake W.E."/>
        </authorList>
    </citation>
    <scope>FUNCTION</scope>
    <scope>DNA-BINDING</scope>
</reference>
<reference key="15">
    <citation type="journal article" date="1994" name="Can. J. Microbiol.">
        <title>Cellular effects of misscheduled brlA, abaA, and wetA expression in Aspergillus nidulans.</title>
        <authorList>
            <person name="Sewall T.C."/>
        </authorList>
    </citation>
    <scope>FUNCTION</scope>
</reference>
<reference key="16">
    <citation type="journal article" date="2014" name="PLoS ONE">
        <title>VelC positively controls sexual development in Aspergillus nidulans.</title>
        <authorList>
            <person name="Park H.S."/>
            <person name="Nam T.Y."/>
            <person name="Han K.H."/>
            <person name="Kim S.C."/>
            <person name="Yu J.H."/>
        </authorList>
    </citation>
    <scope>INDUCTION</scope>
</reference>
<keyword id="KW-0010">Activator</keyword>
<keyword id="KW-0183">Conidiation</keyword>
<keyword id="KW-0238">DNA-binding</keyword>
<keyword id="KW-0479">Metal-binding</keyword>
<keyword id="KW-0539">Nucleus</keyword>
<keyword id="KW-1185">Reference proteome</keyword>
<keyword id="KW-0677">Repeat</keyword>
<keyword id="KW-0749">Sporulation</keyword>
<keyword id="KW-0804">Transcription</keyword>
<keyword id="KW-0805">Transcription regulation</keyword>
<keyword id="KW-0862">Zinc</keyword>
<keyword id="KW-0863">Zinc-finger</keyword>
<evidence type="ECO:0000255" key="1">
    <source>
        <dbReference type="PROSITE-ProRule" id="PRU00042"/>
    </source>
</evidence>
<evidence type="ECO:0000256" key="2">
    <source>
        <dbReference type="SAM" id="MobiDB-lite"/>
    </source>
</evidence>
<evidence type="ECO:0000269" key="3">
    <source>
    </source>
</evidence>
<evidence type="ECO:0000269" key="4">
    <source>
    </source>
</evidence>
<evidence type="ECO:0000269" key="5">
    <source>
    </source>
</evidence>
<evidence type="ECO:0000269" key="6">
    <source>
    </source>
</evidence>
<evidence type="ECO:0000269" key="7">
    <source>
    </source>
</evidence>
<evidence type="ECO:0000269" key="8">
    <source>
    </source>
</evidence>
<evidence type="ECO:0000269" key="9">
    <source>
    </source>
</evidence>
<evidence type="ECO:0000269" key="10">
    <source>
    </source>
</evidence>
<evidence type="ECO:0000269" key="11">
    <source>
    </source>
</evidence>
<evidence type="ECO:0000269" key="12">
    <source>
    </source>
</evidence>
<evidence type="ECO:0000269" key="13">
    <source>
    </source>
</evidence>
<evidence type="ECO:0000269" key="14">
    <source>
    </source>
</evidence>
<evidence type="ECO:0000269" key="15">
    <source>
    </source>
</evidence>
<evidence type="ECO:0000303" key="16">
    <source>
    </source>
</evidence>
<evidence type="ECO:0000303" key="17">
    <source>
    </source>
</evidence>
<evidence type="ECO:0000305" key="18"/>
<comment type="function">
    <text evidence="4 5 6 7 9 10 11 12 13 14 15">BrlA, abaA and wetA are pivotal regulators of conidiophore development and conidium maturation (PubMed:2196567, PubMed:2655931, PubMed:2823119, PubMed:5366214, PubMed:7704830, PubMed:8508769). They act individually and together to regulate their own expression and that of numerous other sporulation-specific genes (PubMed:2108321, PubMed:2655931, PubMed:2823119). Binds promoters of target genes at brlA response elements (BREs) containing the conserved sequence 5'-(C/A)(A/G)AGGG(G/A)-3' (PubMed:8417986). Controls the expression of the conidiophore-specific phenol oxidase ivoB (PubMed:1901560). Controls the expression of the hydrophobin rodA (PubMed:2065971). Mediates the developmental switch from the indeterminate, apical growth pattern of vegetative cells to the budding growth pattern of conidiophores (PubMed:3293800). Expression of brlA leads to activation of abaA, wetA and stuA, cessation of vegetative growth, cellular vacuolization and spore formation.</text>
</comment>
<comment type="subcellular location">
    <subcellularLocation>
        <location>Nucleus</location>
    </subcellularLocation>
</comment>
<comment type="induction">
    <text evidence="3 8 9 10">Expression is induced during conidiation, after conidiophore stalks had formed and had begun to vesiculate (PubMed:2823119). Positively regulated by abaA (PubMed:2655931). Negatively regulated by velC (PubMed:24587098). Expression is also controlled by acoD (PubMed:1508186).</text>
</comment>
<comment type="domain">
    <text evidence="6">Both zinc fingers are required to induce development (PubMed:2108321).</text>
</comment>
<comment type="disruption phenotype">
    <text evidence="10">Prevents the formation of normal conidiophores (PubMed:2823119).</text>
</comment>
<dbReference type="EMBL" id="M20631">
    <property type="protein sequence ID" value="AAA33300.1"/>
    <property type="molecule type" value="Genomic_DNA"/>
</dbReference>
<dbReference type="EMBL" id="AC000133">
    <property type="protein sequence ID" value="AAB48671.1"/>
    <property type="molecule type" value="Genomic_DNA"/>
</dbReference>
<dbReference type="EMBL" id="AACD01000014">
    <property type="protein sequence ID" value="EAA66002.1"/>
    <property type="molecule type" value="Genomic_DNA"/>
</dbReference>
<dbReference type="EMBL" id="S62606">
    <property type="protein sequence ID" value="AAB27149.1"/>
    <property type="molecule type" value="Genomic_DNA"/>
</dbReference>
<dbReference type="EMBL" id="BN001308">
    <property type="protein sequence ID" value="CBF88417.1"/>
    <property type="molecule type" value="Genomic_DNA"/>
</dbReference>
<dbReference type="PIR" id="A28913">
    <property type="entry name" value="A28913"/>
</dbReference>
<dbReference type="RefSeq" id="XP_658577.1">
    <property type="nucleotide sequence ID" value="XM_653485.2"/>
</dbReference>
<dbReference type="SMR" id="P10069"/>
<dbReference type="STRING" id="227321.P10069"/>
<dbReference type="EnsemblFungi" id="CBF88417">
    <property type="protein sequence ID" value="CBF88417"/>
    <property type="gene ID" value="ANIA_00973"/>
</dbReference>
<dbReference type="GeneID" id="2876748"/>
<dbReference type="KEGG" id="ani:ANIA_00973"/>
<dbReference type="VEuPathDB" id="FungiDB:AN0973"/>
<dbReference type="eggNOG" id="KOG1721">
    <property type="taxonomic scope" value="Eukaryota"/>
</dbReference>
<dbReference type="HOGENOM" id="CLU_655506_0_0_1"/>
<dbReference type="InParanoid" id="P10069"/>
<dbReference type="OMA" id="WMPSHES"/>
<dbReference type="OrthoDB" id="654211at2759"/>
<dbReference type="Proteomes" id="UP000000560">
    <property type="component" value="Chromosome VIII"/>
</dbReference>
<dbReference type="GO" id="GO:0005634">
    <property type="term" value="C:nucleus"/>
    <property type="evidence" value="ECO:0000318"/>
    <property type="project" value="GO_Central"/>
</dbReference>
<dbReference type="GO" id="GO:0000987">
    <property type="term" value="F:cis-regulatory region sequence-specific DNA binding"/>
    <property type="evidence" value="ECO:0000318"/>
    <property type="project" value="GO_Central"/>
</dbReference>
<dbReference type="GO" id="GO:0003700">
    <property type="term" value="F:DNA-binding transcription factor activity"/>
    <property type="evidence" value="ECO:0000314"/>
    <property type="project" value="AspGD"/>
</dbReference>
<dbReference type="GO" id="GO:0000981">
    <property type="term" value="F:DNA-binding transcription factor activity, RNA polymerase II-specific"/>
    <property type="evidence" value="ECO:0000318"/>
    <property type="project" value="GO_Central"/>
</dbReference>
<dbReference type="GO" id="GO:0008270">
    <property type="term" value="F:zinc ion binding"/>
    <property type="evidence" value="ECO:0007669"/>
    <property type="project" value="UniProtKB-KW"/>
</dbReference>
<dbReference type="GO" id="GO:0001896">
    <property type="term" value="P:autolysis"/>
    <property type="evidence" value="ECO:0000315"/>
    <property type="project" value="AspGD"/>
</dbReference>
<dbReference type="GO" id="GO:0048315">
    <property type="term" value="P:conidium formation"/>
    <property type="evidence" value="ECO:0000315"/>
    <property type="project" value="AspGD"/>
</dbReference>
<dbReference type="GO" id="GO:0075307">
    <property type="term" value="P:positive regulation of conidium formation"/>
    <property type="evidence" value="ECO:0000315"/>
    <property type="project" value="AspGD"/>
</dbReference>
<dbReference type="GO" id="GO:1900376">
    <property type="term" value="P:regulation of secondary metabolite biosynthetic process"/>
    <property type="evidence" value="ECO:0000315"/>
    <property type="project" value="AspGD"/>
</dbReference>
<dbReference type="GO" id="GO:0010913">
    <property type="term" value="P:regulation of sterigmatocystin biosynthetic process"/>
    <property type="evidence" value="ECO:0000315"/>
    <property type="project" value="AspGD"/>
</dbReference>
<dbReference type="GO" id="GO:0006357">
    <property type="term" value="P:regulation of transcription by RNA polymerase II"/>
    <property type="evidence" value="ECO:0000314"/>
    <property type="project" value="AspGD"/>
</dbReference>
<dbReference type="GO" id="GO:0042594">
    <property type="term" value="P:response to starvation"/>
    <property type="evidence" value="ECO:0000270"/>
    <property type="project" value="AspGD"/>
</dbReference>
<dbReference type="GO" id="GO:0000905">
    <property type="term" value="P:sporocarp development involved in asexual reproduction"/>
    <property type="evidence" value="ECO:0000315"/>
    <property type="project" value="AspGD"/>
</dbReference>
<dbReference type="GO" id="GO:0030435">
    <property type="term" value="P:sporulation resulting in formation of a cellular spore"/>
    <property type="evidence" value="ECO:0007669"/>
    <property type="project" value="UniProtKB-KW"/>
</dbReference>
<dbReference type="GO" id="GO:0045461">
    <property type="term" value="P:sterigmatocystin biosynthetic process"/>
    <property type="evidence" value="ECO:0000315"/>
    <property type="project" value="AspGD"/>
</dbReference>
<dbReference type="FunFam" id="3.30.160.60:FF:000845">
    <property type="entry name" value="C2H2 type conidiation transcription factor BrlA"/>
    <property type="match status" value="1"/>
</dbReference>
<dbReference type="Gene3D" id="3.30.160.60">
    <property type="entry name" value="Classic Zinc Finger"/>
    <property type="match status" value="2"/>
</dbReference>
<dbReference type="InterPro" id="IPR036236">
    <property type="entry name" value="Znf_C2H2_sf"/>
</dbReference>
<dbReference type="InterPro" id="IPR013087">
    <property type="entry name" value="Znf_C2H2_type"/>
</dbReference>
<dbReference type="PANTHER" id="PTHR14003">
    <property type="entry name" value="TRANSCRIPTIONAL REPRESSOR PROTEIN YY"/>
    <property type="match status" value="1"/>
</dbReference>
<dbReference type="PANTHER" id="PTHR14003:SF19">
    <property type="entry name" value="YY2 TRANSCRIPTION FACTOR"/>
    <property type="match status" value="1"/>
</dbReference>
<dbReference type="Pfam" id="PF00096">
    <property type="entry name" value="zf-C2H2"/>
    <property type="match status" value="2"/>
</dbReference>
<dbReference type="SMART" id="SM00355">
    <property type="entry name" value="ZnF_C2H2"/>
    <property type="match status" value="2"/>
</dbReference>
<dbReference type="SUPFAM" id="SSF57667">
    <property type="entry name" value="beta-beta-alpha zinc fingers"/>
    <property type="match status" value="1"/>
</dbReference>
<dbReference type="PROSITE" id="PS00028">
    <property type="entry name" value="ZINC_FINGER_C2H2_1"/>
    <property type="match status" value="2"/>
</dbReference>
<dbReference type="PROSITE" id="PS50157">
    <property type="entry name" value="ZINC_FINGER_C2H2_2"/>
    <property type="match status" value="2"/>
</dbReference>
<proteinExistence type="evidence at protein level"/>
<feature type="chain" id="PRO_0000046869" description="C2H2 type master regulator of conidiophore development brlA">
    <location>
        <begin position="1"/>
        <end position="432"/>
    </location>
</feature>
<feature type="zinc finger region" description="C2H2-type 1" evidence="1">
    <location>
        <begin position="320"/>
        <end position="344"/>
    </location>
</feature>
<feature type="zinc finger region" description="C2H2-type 2" evidence="1">
    <location>
        <begin position="350"/>
        <end position="375"/>
    </location>
</feature>
<feature type="region of interest" description="Disordered" evidence="2">
    <location>
        <begin position="22"/>
        <end position="72"/>
    </location>
</feature>
<feature type="region of interest" description="Disordered" evidence="2">
    <location>
        <begin position="238"/>
        <end position="260"/>
    </location>
</feature>
<feature type="region of interest" description="Disordered" evidence="2">
    <location>
        <begin position="388"/>
        <end position="432"/>
    </location>
</feature>
<feature type="compositionally biased region" description="Low complexity" evidence="2">
    <location>
        <begin position="29"/>
        <end position="44"/>
    </location>
</feature>
<feature type="compositionally biased region" description="Polar residues" evidence="2">
    <location>
        <begin position="62"/>
        <end position="72"/>
    </location>
</feature>
<feature type="compositionally biased region" description="Polar residues" evidence="2">
    <location>
        <begin position="238"/>
        <end position="252"/>
    </location>
</feature>
<feature type="mutagenesis site" description="Fails to induce either the asexual reproductive pathway or the expression of development-specific genes." evidence="6">
    <original>C</original>
    <variation>S</variation>
    <location>
        <position position="327"/>
    </location>
</feature>
<feature type="mutagenesis site" description="Fails to induce either the asexual reproductive pathway or the expression of development-specific genes." evidence="6">
    <original>C</original>
    <variation>S</variation>
    <location>
        <position position="357"/>
    </location>
</feature>
<name>BRLA_EMENI</name>